<proteinExistence type="inferred from homology"/>
<name>RL28_EHRCR</name>
<keyword id="KW-1185">Reference proteome</keyword>
<keyword id="KW-0687">Ribonucleoprotein</keyword>
<keyword id="KW-0689">Ribosomal protein</keyword>
<evidence type="ECO:0000255" key="1">
    <source>
        <dbReference type="HAMAP-Rule" id="MF_00373"/>
    </source>
</evidence>
<evidence type="ECO:0000305" key="2"/>
<protein>
    <recommendedName>
        <fullName evidence="1">Large ribosomal subunit protein bL28</fullName>
    </recommendedName>
    <alternativeName>
        <fullName evidence="2">50S ribosomal protein L28</fullName>
    </alternativeName>
</protein>
<gene>
    <name evidence="1" type="primary">rpmB</name>
    <name type="ordered locus">ECH_0484</name>
</gene>
<reference key="1">
    <citation type="journal article" date="2006" name="PLoS Genet.">
        <title>Comparative genomics of emerging human ehrlichiosis agents.</title>
        <authorList>
            <person name="Dunning Hotopp J.C."/>
            <person name="Lin M."/>
            <person name="Madupu R."/>
            <person name="Crabtree J."/>
            <person name="Angiuoli S.V."/>
            <person name="Eisen J.A."/>
            <person name="Seshadri R."/>
            <person name="Ren Q."/>
            <person name="Wu M."/>
            <person name="Utterback T.R."/>
            <person name="Smith S."/>
            <person name="Lewis M."/>
            <person name="Khouri H."/>
            <person name="Zhang C."/>
            <person name="Niu H."/>
            <person name="Lin Q."/>
            <person name="Ohashi N."/>
            <person name="Zhi N."/>
            <person name="Nelson W.C."/>
            <person name="Brinkac L.M."/>
            <person name="Dodson R.J."/>
            <person name="Rosovitz M.J."/>
            <person name="Sundaram J.P."/>
            <person name="Daugherty S.C."/>
            <person name="Davidsen T."/>
            <person name="Durkin A.S."/>
            <person name="Gwinn M.L."/>
            <person name="Haft D.H."/>
            <person name="Selengut J.D."/>
            <person name="Sullivan S.A."/>
            <person name="Zafar N."/>
            <person name="Zhou L."/>
            <person name="Benahmed F."/>
            <person name="Forberger H."/>
            <person name="Halpin R."/>
            <person name="Mulligan S."/>
            <person name="Robinson J."/>
            <person name="White O."/>
            <person name="Rikihisa Y."/>
            <person name="Tettelin H."/>
        </authorList>
    </citation>
    <scope>NUCLEOTIDE SEQUENCE [LARGE SCALE GENOMIC DNA]</scope>
    <source>
        <strain>ATCC CRL-10679 / Arkansas</strain>
    </source>
</reference>
<accession>Q2GGY3</accession>
<organism>
    <name type="scientific">Ehrlichia chaffeensis (strain ATCC CRL-10679 / Arkansas)</name>
    <dbReference type="NCBI Taxonomy" id="205920"/>
    <lineage>
        <taxon>Bacteria</taxon>
        <taxon>Pseudomonadati</taxon>
        <taxon>Pseudomonadota</taxon>
        <taxon>Alphaproteobacteria</taxon>
        <taxon>Rickettsiales</taxon>
        <taxon>Anaplasmataceae</taxon>
        <taxon>Ehrlichia</taxon>
    </lineage>
</organism>
<feature type="chain" id="PRO_1000007231" description="Large ribosomal subunit protein bL28">
    <location>
        <begin position="1"/>
        <end position="100"/>
    </location>
</feature>
<comment type="similarity">
    <text evidence="1">Belongs to the bacterial ribosomal protein bL28 family.</text>
</comment>
<dbReference type="EMBL" id="CP000236">
    <property type="protein sequence ID" value="ABD44802.1"/>
    <property type="molecule type" value="Genomic_DNA"/>
</dbReference>
<dbReference type="RefSeq" id="WP_011452632.1">
    <property type="nucleotide sequence ID" value="NC_007799.1"/>
</dbReference>
<dbReference type="SMR" id="Q2GGY3"/>
<dbReference type="STRING" id="205920.ECH_0484"/>
<dbReference type="KEGG" id="ech:ECH_0484"/>
<dbReference type="eggNOG" id="COG0227">
    <property type="taxonomic scope" value="Bacteria"/>
</dbReference>
<dbReference type="HOGENOM" id="CLU_064548_4_2_5"/>
<dbReference type="OrthoDB" id="9805609at2"/>
<dbReference type="Proteomes" id="UP000008320">
    <property type="component" value="Chromosome"/>
</dbReference>
<dbReference type="GO" id="GO:0022625">
    <property type="term" value="C:cytosolic large ribosomal subunit"/>
    <property type="evidence" value="ECO:0007669"/>
    <property type="project" value="TreeGrafter"/>
</dbReference>
<dbReference type="GO" id="GO:0003735">
    <property type="term" value="F:structural constituent of ribosome"/>
    <property type="evidence" value="ECO:0007669"/>
    <property type="project" value="InterPro"/>
</dbReference>
<dbReference type="GO" id="GO:0006412">
    <property type="term" value="P:translation"/>
    <property type="evidence" value="ECO:0007669"/>
    <property type="project" value="UniProtKB-UniRule"/>
</dbReference>
<dbReference type="Gene3D" id="2.30.170.40">
    <property type="entry name" value="Ribosomal protein L28/L24"/>
    <property type="match status" value="1"/>
</dbReference>
<dbReference type="HAMAP" id="MF_00373">
    <property type="entry name" value="Ribosomal_bL28"/>
    <property type="match status" value="1"/>
</dbReference>
<dbReference type="InterPro" id="IPR026569">
    <property type="entry name" value="Ribosomal_bL28"/>
</dbReference>
<dbReference type="InterPro" id="IPR034704">
    <property type="entry name" value="Ribosomal_bL28/bL31-like_sf"/>
</dbReference>
<dbReference type="InterPro" id="IPR001383">
    <property type="entry name" value="Ribosomal_bL28_bact-type"/>
</dbReference>
<dbReference type="InterPro" id="IPR037147">
    <property type="entry name" value="Ribosomal_bL28_sf"/>
</dbReference>
<dbReference type="NCBIfam" id="TIGR00009">
    <property type="entry name" value="L28"/>
    <property type="match status" value="1"/>
</dbReference>
<dbReference type="PANTHER" id="PTHR13528">
    <property type="entry name" value="39S RIBOSOMAL PROTEIN L28, MITOCHONDRIAL"/>
    <property type="match status" value="1"/>
</dbReference>
<dbReference type="PANTHER" id="PTHR13528:SF2">
    <property type="entry name" value="LARGE RIBOSOMAL SUBUNIT PROTEIN BL28M"/>
    <property type="match status" value="1"/>
</dbReference>
<dbReference type="Pfam" id="PF00830">
    <property type="entry name" value="Ribosomal_L28"/>
    <property type="match status" value="1"/>
</dbReference>
<dbReference type="SUPFAM" id="SSF143800">
    <property type="entry name" value="L28p-like"/>
    <property type="match status" value="1"/>
</dbReference>
<sequence length="100" mass="11224">MSRVCDITGQGKSFGNKVSHSNRKTKRAYLVNLHNVTLVSDILNRKFKFKVSSRTLRTVNYKGGLDLYLLNTSSRKLTDKAQKIKKLVKNAVAKGVKVSL</sequence>